<proteinExistence type="evidence at transcript level"/>
<gene>
    <name type="primary">IFI16</name>
</gene>
<evidence type="ECO:0000250" key="1"/>
<evidence type="ECO:0000250" key="2">
    <source>
        <dbReference type="UniProtKB" id="Q16666"/>
    </source>
</evidence>
<evidence type="ECO:0000255" key="3">
    <source>
        <dbReference type="PROSITE-ProRule" id="PRU00061"/>
    </source>
</evidence>
<evidence type="ECO:0000255" key="4">
    <source>
        <dbReference type="PROSITE-ProRule" id="PRU00106"/>
    </source>
</evidence>
<evidence type="ECO:0000256" key="5">
    <source>
        <dbReference type="SAM" id="MobiDB-lite"/>
    </source>
</evidence>
<evidence type="ECO:0000305" key="6"/>
<name>IF16_PONAB</name>
<comment type="function">
    <text evidence="1">Binds double-stranded DNA. Binds preferentially to supercoiled DNA and cruciform DNA structures. Seems to be involved in transcriptional regulation. May function as a transcriptional repressor. Could have a role in the regulation of hematopoietic differentiation through activation of unknown target genes. Controls cellular proliferation by modulating the functions of cell cycle regulatory factors including p53/TP53 and the retinoblastoma protein. May be involved in TP53-mediated transcriptional activation by enhancing TP53 sequence-specific DNA binding and modulating TP53 phosphorylation status. Seems to be involved in energy-level-dependent activation of the ATM/ AMPK/TP53 pathway coupled to regulation of autophagy. May be involved in regulation of TP53-mediated cell death also involving BRCA1. May be involved in the senescence of prostate epithelial cells. Involved in innate immune response by recognizing viral dsDNA in the cytosol and probably in the nucleus. After binding to viral DNA in the cytoplasm recruits TMEM173/STING and mediates the induction of IFN-beta. Has anti-inflammatory activity and inhibits the activation of the AIM2 inflammasome, probably via association with AIM2. Proposed to bind viral DNA in the nucleus and to induce the formation of nuclear caspase-1-activating inflammasome formation via association with PYCARD. Inhibits replication of herpesviruses probably by interfering with promoter recruitment of members of the Sp1 family of transcription factors (By similarity).</text>
</comment>
<comment type="subunit">
    <text evidence="1 2">Forms homooligomers. Interacts with TMEM173, AIM2, PYCARD and CASP1. Interacts with BRCA1, TP53, E2F1, RB1 and SP1. Interacts with MTA1 (By similarity). Interacts with MTA1. Interacts with PYDC5 (By similarity).</text>
</comment>
<comment type="subcellular location">
    <subcellularLocation>
        <location evidence="1">Nucleus</location>
    </subcellularLocation>
    <subcellularLocation>
        <location evidence="1">Cytoplasm</location>
    </subcellularLocation>
</comment>
<comment type="domain">
    <text evidence="1">The HIN-20 domains mediates dsDNA binding via electrostatic interactions.</text>
</comment>
<comment type="PTM">
    <text evidence="1">Lysine acetylation in the multipartite nuclear localization signal (NLS) regulates the subcellular location.</text>
</comment>
<comment type="PTM">
    <text evidence="1">Phosphorylated on Ser and Thr.</text>
</comment>
<comment type="similarity">
    <text evidence="6">Belongs to the HIN-200 family.</text>
</comment>
<comment type="sequence caution" evidence="6">
    <conflict type="erroneous initiation">
        <sequence resource="EMBL-CDS" id="CAH90343"/>
    </conflict>
</comment>
<protein>
    <recommendedName>
        <fullName>Gamma-interferon-inducible protein 16</fullName>
        <shortName>Ifi-16</shortName>
    </recommendedName>
    <alternativeName>
        <fullName>Interferon-inducible myeloid differentiation transcriptional activator</fullName>
    </alternativeName>
</protein>
<organism>
    <name type="scientific">Pongo abelii</name>
    <name type="common">Sumatran orangutan</name>
    <name type="synonym">Pongo pygmaeus abelii</name>
    <dbReference type="NCBI Taxonomy" id="9601"/>
    <lineage>
        <taxon>Eukaryota</taxon>
        <taxon>Metazoa</taxon>
        <taxon>Chordata</taxon>
        <taxon>Craniata</taxon>
        <taxon>Vertebrata</taxon>
        <taxon>Euteleostomi</taxon>
        <taxon>Mammalia</taxon>
        <taxon>Eutheria</taxon>
        <taxon>Euarchontoglires</taxon>
        <taxon>Primates</taxon>
        <taxon>Haplorrhini</taxon>
        <taxon>Catarrhini</taxon>
        <taxon>Hominidae</taxon>
        <taxon>Pongo</taxon>
    </lineage>
</organism>
<accession>Q5RD14</accession>
<sequence length="785" mass="88381">MEKKYKNIVLLKGLEVINDYHFRMVKSLLSNDLKLNLKMREEYDKIQIADLMEEKFRGDAGLGKLIQIFKDIPTLEDLAETLKKEKLKAKGLAPSRKRKKEVDAASPAPSTSSTVKTEGAEATPGAQKRKKTTKEKSGPKGSKVSKEQTQPPCPAGAGMSTAMGRSPSPKTSSSAPPNTSSTENPKTVAKCQATPRRSVLQKGPVIVKVLSTTKPFEYETPEMEKKIMFHATVATQTQFFHVKVLNTSLKEKFNGKKIIIISDYLEYDSLLEVNEESTVSEAGPNQKFEVPNKIINRAKETLKIDILHKQASGNIVYGVFTLHKKTVNQKTTIYKIQDDRGKMDVVGTGQCHNIPCEEGDKLQLYCFRLRKKNQMSTLISEMHSFIQIKKKTNPRNNDPKSMKLPQEQSQLPNPSEAGTTFPESHLWTPQMPPTTPSSSFFTKKSEDTISKMNDFMRMQILKEESHFPGPFMTSIGPAESYPHTPQMPPSTPSSSFLTTKSEDTISKMNDFMRMQILKEESHFPRPFMTSIGPAESYPHTPQMPPSTPSSSFLTTWKPKLQTEPEEVSIEDSAQSDLKEVMVLNATESFVYEPKEQKKMFHATVATEKEVFRVKVFNIDLKEKFTPKKIIAISNYVCRNGFLEVYPFTLVADVNADPKMEIPKGLIRSANITPKINQLCSQTKGSFVNGVFEVHKKNVRGEFTYYEIQDNTGKMEVVVHGRLTTINCEEGDKLKLTCFELAPKSGNTGELRSVIHSHIKVIKTRKNKKDILNPDSSMETSPDFFF</sequence>
<dbReference type="EMBL" id="CR858104">
    <property type="protein sequence ID" value="CAH90343.1"/>
    <property type="status" value="ALT_INIT"/>
    <property type="molecule type" value="mRNA"/>
</dbReference>
<dbReference type="RefSeq" id="NP_001125164.1">
    <property type="nucleotide sequence ID" value="NM_001131692.1"/>
</dbReference>
<dbReference type="SMR" id="Q5RD14"/>
<dbReference type="FunCoup" id="Q5RD14">
    <property type="interactions" value="496"/>
</dbReference>
<dbReference type="STRING" id="9601.ENSPPYP00000000774"/>
<dbReference type="GeneID" id="100172051"/>
<dbReference type="KEGG" id="pon:100172051"/>
<dbReference type="CTD" id="3428"/>
<dbReference type="eggNOG" id="ENOG502QTQS">
    <property type="taxonomic scope" value="Eukaryota"/>
</dbReference>
<dbReference type="HOGENOM" id="CLU_022874_0_0_1"/>
<dbReference type="InParanoid" id="Q5RD14"/>
<dbReference type="OrthoDB" id="9622064at2759"/>
<dbReference type="TreeFam" id="TF337385"/>
<dbReference type="Proteomes" id="UP000001595">
    <property type="component" value="Unplaced"/>
</dbReference>
<dbReference type="GO" id="GO:0005829">
    <property type="term" value="C:cytosol"/>
    <property type="evidence" value="ECO:0007669"/>
    <property type="project" value="TreeGrafter"/>
</dbReference>
<dbReference type="GO" id="GO:0005730">
    <property type="term" value="C:nucleolus"/>
    <property type="evidence" value="ECO:0007669"/>
    <property type="project" value="TreeGrafter"/>
</dbReference>
<dbReference type="GO" id="GO:0005654">
    <property type="term" value="C:nucleoplasm"/>
    <property type="evidence" value="ECO:0007669"/>
    <property type="project" value="TreeGrafter"/>
</dbReference>
<dbReference type="GO" id="GO:0005634">
    <property type="term" value="C:nucleus"/>
    <property type="evidence" value="ECO:0000250"/>
    <property type="project" value="UniProtKB"/>
</dbReference>
<dbReference type="GO" id="GO:0003690">
    <property type="term" value="F:double-stranded DNA binding"/>
    <property type="evidence" value="ECO:0007669"/>
    <property type="project" value="TreeGrafter"/>
</dbReference>
<dbReference type="GO" id="GO:0002218">
    <property type="term" value="P:activation of innate immune response"/>
    <property type="evidence" value="ECO:0007669"/>
    <property type="project" value="InterPro"/>
</dbReference>
<dbReference type="GO" id="GO:0006915">
    <property type="term" value="P:apoptotic process"/>
    <property type="evidence" value="ECO:0007669"/>
    <property type="project" value="UniProtKB-KW"/>
</dbReference>
<dbReference type="GO" id="GO:0006914">
    <property type="term" value="P:autophagy"/>
    <property type="evidence" value="ECO:0007669"/>
    <property type="project" value="UniProtKB-KW"/>
</dbReference>
<dbReference type="GO" id="GO:0035458">
    <property type="term" value="P:cellular response to interferon-beta"/>
    <property type="evidence" value="ECO:0007669"/>
    <property type="project" value="InterPro"/>
</dbReference>
<dbReference type="GO" id="GO:0006954">
    <property type="term" value="P:inflammatory response"/>
    <property type="evidence" value="ECO:0007669"/>
    <property type="project" value="UniProtKB-KW"/>
</dbReference>
<dbReference type="GO" id="GO:0045087">
    <property type="term" value="P:innate immune response"/>
    <property type="evidence" value="ECO:0007669"/>
    <property type="project" value="UniProtKB-KW"/>
</dbReference>
<dbReference type="CDD" id="cd08305">
    <property type="entry name" value="Pyrin"/>
    <property type="match status" value="1"/>
</dbReference>
<dbReference type="FunFam" id="1.10.533.10:FF:000011">
    <property type="entry name" value="Myeloid cell nuclear differentiation antigen"/>
    <property type="match status" value="1"/>
</dbReference>
<dbReference type="FunFam" id="2.40.50.140:FF:000101">
    <property type="entry name" value="Myeloid cell nuclear differentiation antigen"/>
    <property type="match status" value="2"/>
</dbReference>
<dbReference type="FunFam" id="2.40.50.140:FF:000105">
    <property type="entry name" value="Myeloid cell nuclear differentiation antigen"/>
    <property type="match status" value="2"/>
</dbReference>
<dbReference type="Gene3D" id="1.10.533.10">
    <property type="entry name" value="Death Domain, Fas"/>
    <property type="match status" value="1"/>
</dbReference>
<dbReference type="Gene3D" id="2.40.50.140">
    <property type="entry name" value="Nucleic acid-binding proteins"/>
    <property type="match status" value="4"/>
</dbReference>
<dbReference type="InterPro" id="IPR004020">
    <property type="entry name" value="DAPIN"/>
</dbReference>
<dbReference type="InterPro" id="IPR011029">
    <property type="entry name" value="DEATH-like_dom_sf"/>
</dbReference>
<dbReference type="InterPro" id="IPR040205">
    <property type="entry name" value="HIN-200"/>
</dbReference>
<dbReference type="InterPro" id="IPR004021">
    <property type="entry name" value="HIN200/IF120x"/>
</dbReference>
<dbReference type="InterPro" id="IPR012340">
    <property type="entry name" value="NA-bd_OB-fold"/>
</dbReference>
<dbReference type="PANTHER" id="PTHR12200:SF5">
    <property type="entry name" value="GAMMA-INTERFERON-INDUCIBLE PROTEIN 16"/>
    <property type="match status" value="1"/>
</dbReference>
<dbReference type="PANTHER" id="PTHR12200">
    <property type="entry name" value="INTERFERON-INDUCIBLE PROTEIN AIM2 FAMILY MEMBER"/>
    <property type="match status" value="1"/>
</dbReference>
<dbReference type="Pfam" id="PF02760">
    <property type="entry name" value="HIN"/>
    <property type="match status" value="2"/>
</dbReference>
<dbReference type="Pfam" id="PF02758">
    <property type="entry name" value="PYRIN"/>
    <property type="match status" value="1"/>
</dbReference>
<dbReference type="SMART" id="SM01289">
    <property type="entry name" value="PYRIN"/>
    <property type="match status" value="1"/>
</dbReference>
<dbReference type="SUPFAM" id="SSF159141">
    <property type="entry name" value="HIN-2000 domain-like"/>
    <property type="match status" value="4"/>
</dbReference>
<dbReference type="PROSITE" id="PS50824">
    <property type="entry name" value="DAPIN"/>
    <property type="match status" value="1"/>
</dbReference>
<dbReference type="PROSITE" id="PS50834">
    <property type="entry name" value="HIN_200"/>
    <property type="match status" value="2"/>
</dbReference>
<keyword id="KW-0007">Acetylation</keyword>
<keyword id="KW-0010">Activator</keyword>
<keyword id="KW-0053">Apoptosis</keyword>
<keyword id="KW-0072">Autophagy</keyword>
<keyword id="KW-0963">Cytoplasm</keyword>
<keyword id="KW-0238">DNA-binding</keyword>
<keyword id="KW-0391">Immunity</keyword>
<keyword id="KW-0395">Inflammatory response</keyword>
<keyword id="KW-0399">Innate immunity</keyword>
<keyword id="KW-1017">Isopeptide bond</keyword>
<keyword id="KW-0539">Nucleus</keyword>
<keyword id="KW-0597">Phosphoprotein</keyword>
<keyword id="KW-1185">Reference proteome</keyword>
<keyword id="KW-0677">Repeat</keyword>
<keyword id="KW-0678">Repressor</keyword>
<keyword id="KW-0804">Transcription</keyword>
<keyword id="KW-0805">Transcription regulation</keyword>
<keyword id="KW-0832">Ubl conjugation</keyword>
<feature type="chain" id="PRO_0000334523" description="Gamma-interferon-inducible protein 16">
    <location>
        <begin position="1"/>
        <end position="785"/>
    </location>
</feature>
<feature type="domain" description="Pyrin" evidence="3">
    <location>
        <begin position="5"/>
        <end position="92"/>
    </location>
</feature>
<feature type="domain" description="HIN-200 1" evidence="4">
    <location>
        <begin position="193"/>
        <end position="393"/>
    </location>
</feature>
<feature type="domain" description="HIN-200 2" evidence="4">
    <location>
        <begin position="566"/>
        <end position="765"/>
    </location>
</feature>
<feature type="region of interest" description="Disordered" evidence="5">
    <location>
        <begin position="88"/>
        <end position="196"/>
    </location>
</feature>
<feature type="region of interest" description="Interaction with TP53 C-terminus" evidence="1">
    <location>
        <begin position="192"/>
        <end position="393"/>
    </location>
</feature>
<feature type="region of interest" description="Disordered" evidence="5">
    <location>
        <begin position="388"/>
        <end position="442"/>
    </location>
</feature>
<feature type="region of interest" description="Interaction with TP53 core domain" evidence="1">
    <location>
        <begin position="571"/>
        <end position="766"/>
    </location>
</feature>
<feature type="short sequence motif" description="Nuclear localization signal" evidence="1">
    <location>
        <begin position="96"/>
        <end position="100"/>
    </location>
</feature>
<feature type="short sequence motif" description="Nuclear localization signal" evidence="1">
    <location>
        <begin position="128"/>
        <end position="131"/>
    </location>
</feature>
<feature type="short sequence motif" description="Nuclear localization signal" evidence="1">
    <location>
        <begin position="134"/>
        <end position="136"/>
    </location>
</feature>
<feature type="short sequence motif" description="Nuclear localization signal" evidence="1">
    <location>
        <begin position="140"/>
        <end position="143"/>
    </location>
</feature>
<feature type="compositionally biased region" description="Basic residues" evidence="5">
    <location>
        <begin position="88"/>
        <end position="99"/>
    </location>
</feature>
<feature type="compositionally biased region" description="Low complexity" evidence="5">
    <location>
        <begin position="104"/>
        <end position="114"/>
    </location>
</feature>
<feature type="compositionally biased region" description="Low complexity" evidence="5">
    <location>
        <begin position="166"/>
        <end position="182"/>
    </location>
</feature>
<feature type="compositionally biased region" description="Polar residues" evidence="5">
    <location>
        <begin position="406"/>
        <end position="422"/>
    </location>
</feature>
<feature type="modified residue" description="N6-acetyllysine" evidence="2">
    <location>
        <position position="45"/>
    </location>
</feature>
<feature type="modified residue" description="Phosphoserine" evidence="2">
    <location>
        <position position="95"/>
    </location>
</feature>
<feature type="modified residue" description="N6-acetyllysine" evidence="2">
    <location>
        <position position="99"/>
    </location>
</feature>
<feature type="modified residue" description="Phosphoserine" evidence="2">
    <location>
        <position position="106"/>
    </location>
</feature>
<feature type="modified residue" description="N6-acetyllysine; alternate" evidence="2">
    <location>
        <position position="128"/>
    </location>
</feature>
<feature type="modified residue" description="Phosphoserine" evidence="2">
    <location>
        <position position="168"/>
    </location>
</feature>
<feature type="modified residue" description="Phosphoserine" evidence="2">
    <location>
        <position position="174"/>
    </location>
</feature>
<feature type="modified residue" description="N6-acetyllysine" evidence="2">
    <location>
        <position position="214"/>
    </location>
</feature>
<feature type="modified residue" description="N6-acetyllysine" evidence="2">
    <location>
        <position position="444"/>
    </location>
</feature>
<feature type="modified residue" description="N6-acetyllysine" evidence="2">
    <location>
        <position position="451"/>
    </location>
</feature>
<feature type="modified residue" description="Phosphoserine" evidence="2">
    <location>
        <position position="575"/>
    </location>
</feature>
<feature type="modified residue" description="N6-acetyllysine" evidence="2">
    <location>
        <position position="598"/>
    </location>
</feature>
<feature type="modified residue" description="N6-acetyllysine" evidence="2">
    <location>
        <position position="614"/>
    </location>
</feature>
<feature type="modified residue" description="Phosphoserine" evidence="2">
    <location>
        <position position="780"/>
    </location>
</feature>
<feature type="cross-link" description="Glycyl lysine isopeptide (Lys-Gly) (interchain with G-Cter in SUMO2)" evidence="2">
    <location>
        <position position="116"/>
    </location>
</feature>
<feature type="cross-link" description="Glycyl lysine isopeptide (Lys-Gly) (interchain with G-Cter in SUMO2); alternate" evidence="2">
    <location>
        <position position="128"/>
    </location>
</feature>
<feature type="cross-link" description="Glycyl lysine isopeptide (Lys-Gly) (interchain with G-Cter in SUMO2)" evidence="2">
    <location>
        <position position="683"/>
    </location>
</feature>
<reference key="1">
    <citation type="submission" date="2004-11" db="EMBL/GenBank/DDBJ databases">
        <authorList>
            <consortium name="The German cDNA consortium"/>
        </authorList>
    </citation>
    <scope>NUCLEOTIDE SEQUENCE [LARGE SCALE MRNA]</scope>
    <source>
        <tissue>Heart</tissue>
    </source>
</reference>